<reference key="1">
    <citation type="journal article" date="1997" name="Mol. Biochem. Parasitol.">
        <title>Organization, sequence and stage-specific expression of the phosphoglycerate kinase genes of Leishmania mexicana mexicana.</title>
        <authorList>
            <person name="Adje C.A."/>
            <person name="Opperdoes F.R."/>
            <person name="Michels P.A.M."/>
        </authorList>
    </citation>
    <scope>NUCLEOTIDE SEQUENCE [GENOMIC DNA]</scope>
    <source>
        <strain>MHOM/BZ/84/BEL46</strain>
    </source>
</reference>
<comment type="catalytic activity">
    <reaction evidence="2">
        <text>(2R)-3-phosphoglycerate + ATP = (2R)-3-phospho-glyceroyl phosphate + ADP</text>
        <dbReference type="Rhea" id="RHEA:14801"/>
        <dbReference type="ChEBI" id="CHEBI:30616"/>
        <dbReference type="ChEBI" id="CHEBI:57604"/>
        <dbReference type="ChEBI" id="CHEBI:58272"/>
        <dbReference type="ChEBI" id="CHEBI:456216"/>
        <dbReference type="EC" id="2.7.2.3"/>
    </reaction>
</comment>
<comment type="cofactor">
    <cofactor evidence="3">
        <name>Mg(2+)</name>
        <dbReference type="ChEBI" id="CHEBI:18420"/>
    </cofactor>
</comment>
<comment type="pathway">
    <text>Carbohydrate degradation; glycolysis; pyruvate from D-glyceraldehyde 3-phosphate: step 2/5.</text>
</comment>
<comment type="subunit">
    <text evidence="1">Monomer.</text>
</comment>
<comment type="subcellular location">
    <subcellularLocation>
        <location>Cytoplasm</location>
    </subcellularLocation>
</comment>
<comment type="domain">
    <text>This cytosolic PGK lacks a C-terminal extension of 38 AA which is present in the glycosomal isoenzyme.</text>
</comment>
<comment type="similarity">
    <text evidence="5">Belongs to the phosphoglycerate kinase family.</text>
</comment>
<dbReference type="EC" id="2.7.2.3" evidence="2"/>
<dbReference type="EMBL" id="X98486">
    <property type="protein sequence ID" value="CAA67112.1"/>
    <property type="molecule type" value="Genomic_DNA"/>
</dbReference>
<dbReference type="SMR" id="Q27684"/>
<dbReference type="VEuPathDB" id="TriTrypDB:LmxM.20.0100"/>
<dbReference type="UniPathway" id="UPA00109">
    <property type="reaction ID" value="UER00185"/>
</dbReference>
<dbReference type="GO" id="GO:0005829">
    <property type="term" value="C:cytosol"/>
    <property type="evidence" value="ECO:0007669"/>
    <property type="project" value="TreeGrafter"/>
</dbReference>
<dbReference type="GO" id="GO:0043531">
    <property type="term" value="F:ADP binding"/>
    <property type="evidence" value="ECO:0007669"/>
    <property type="project" value="TreeGrafter"/>
</dbReference>
<dbReference type="GO" id="GO:0005524">
    <property type="term" value="F:ATP binding"/>
    <property type="evidence" value="ECO:0007669"/>
    <property type="project" value="UniProtKB-KW"/>
</dbReference>
<dbReference type="GO" id="GO:0046872">
    <property type="term" value="F:metal ion binding"/>
    <property type="evidence" value="ECO:0007669"/>
    <property type="project" value="UniProtKB-KW"/>
</dbReference>
<dbReference type="GO" id="GO:0004618">
    <property type="term" value="F:phosphoglycerate kinase activity"/>
    <property type="evidence" value="ECO:0007669"/>
    <property type="project" value="UniProtKB-EC"/>
</dbReference>
<dbReference type="GO" id="GO:0006094">
    <property type="term" value="P:gluconeogenesis"/>
    <property type="evidence" value="ECO:0007669"/>
    <property type="project" value="TreeGrafter"/>
</dbReference>
<dbReference type="GO" id="GO:0006096">
    <property type="term" value="P:glycolytic process"/>
    <property type="evidence" value="ECO:0007669"/>
    <property type="project" value="UniProtKB-UniPathway"/>
</dbReference>
<dbReference type="CDD" id="cd00318">
    <property type="entry name" value="Phosphoglycerate_kinase"/>
    <property type="match status" value="1"/>
</dbReference>
<dbReference type="FunFam" id="3.40.50.1260:FF:000001">
    <property type="entry name" value="Phosphoglycerate kinase"/>
    <property type="match status" value="1"/>
</dbReference>
<dbReference type="FunFam" id="3.40.50.1260:FF:000011">
    <property type="entry name" value="Phosphoglycerate kinase"/>
    <property type="match status" value="1"/>
</dbReference>
<dbReference type="Gene3D" id="3.40.50.1260">
    <property type="entry name" value="Phosphoglycerate kinase, N-terminal domain"/>
    <property type="match status" value="2"/>
</dbReference>
<dbReference type="HAMAP" id="MF_00145">
    <property type="entry name" value="Phosphoglyc_kinase"/>
    <property type="match status" value="1"/>
</dbReference>
<dbReference type="InterPro" id="IPR027250">
    <property type="entry name" value="Pgk_euglenozoa"/>
</dbReference>
<dbReference type="InterPro" id="IPR001576">
    <property type="entry name" value="Phosphoglycerate_kinase"/>
</dbReference>
<dbReference type="InterPro" id="IPR015911">
    <property type="entry name" value="Phosphoglycerate_kinase_CS"/>
</dbReference>
<dbReference type="InterPro" id="IPR015824">
    <property type="entry name" value="Phosphoglycerate_kinase_N"/>
</dbReference>
<dbReference type="InterPro" id="IPR036043">
    <property type="entry name" value="Phosphoglycerate_kinase_sf"/>
</dbReference>
<dbReference type="PANTHER" id="PTHR11406">
    <property type="entry name" value="PHOSPHOGLYCERATE KINASE"/>
    <property type="match status" value="1"/>
</dbReference>
<dbReference type="PANTHER" id="PTHR11406:SF23">
    <property type="entry name" value="PHOSPHOGLYCERATE KINASE 1, CHLOROPLASTIC-RELATED"/>
    <property type="match status" value="1"/>
</dbReference>
<dbReference type="Pfam" id="PF00162">
    <property type="entry name" value="PGK"/>
    <property type="match status" value="1"/>
</dbReference>
<dbReference type="PIRSF" id="PIRSF000724">
    <property type="entry name" value="Pgk"/>
    <property type="match status" value="1"/>
</dbReference>
<dbReference type="PIRSF" id="PIRSF500126">
    <property type="entry name" value="Pgk_euglenozoa"/>
    <property type="match status" value="1"/>
</dbReference>
<dbReference type="PRINTS" id="PR00477">
    <property type="entry name" value="PHGLYCKINASE"/>
</dbReference>
<dbReference type="SUPFAM" id="SSF53748">
    <property type="entry name" value="Phosphoglycerate kinase"/>
    <property type="match status" value="1"/>
</dbReference>
<dbReference type="PROSITE" id="PS00111">
    <property type="entry name" value="PGLYCERATE_KINASE"/>
    <property type="match status" value="1"/>
</dbReference>
<organism>
    <name type="scientific">Leishmania mexicana</name>
    <dbReference type="NCBI Taxonomy" id="5665"/>
    <lineage>
        <taxon>Eukaryota</taxon>
        <taxon>Discoba</taxon>
        <taxon>Euglenozoa</taxon>
        <taxon>Kinetoplastea</taxon>
        <taxon>Metakinetoplastina</taxon>
        <taxon>Trypanosomatida</taxon>
        <taxon>Trypanosomatidae</taxon>
        <taxon>Leishmaniinae</taxon>
        <taxon>Leishmania</taxon>
    </lineage>
</organism>
<name>PGKB_LEIME</name>
<keyword id="KW-0067">ATP-binding</keyword>
<keyword id="KW-0963">Cytoplasm</keyword>
<keyword id="KW-0324">Glycolysis</keyword>
<keyword id="KW-0418">Kinase</keyword>
<keyword id="KW-0460">Magnesium</keyword>
<keyword id="KW-0479">Metal-binding</keyword>
<keyword id="KW-0547">Nucleotide-binding</keyword>
<keyword id="KW-0808">Transferase</keyword>
<sequence>MSLVLKKSIDDVALKDKKVLIRVDFNVPVKNGEITNDFRIRSALPTIQKVLKEGGSCILMSHLGRPKGARMSDPKPEKGVRGYEEAATLRPVAARLSELLEEKVAKAPDCLNASIYVSKLKRGDVLLLENVRFYTEEGSKKEEEADAMAKVLASYADLYVSDAFGTAHRDSATMTGIPKVLGSGYAGYLMEKEINYFSRVLNNPPRPLVAIVGGAKVSDKIELLDNMLGRINYLVIGGAMAYTFQKAQGRKIGISMCEEDKLDLAKSLLKKAQERGVQVLLPVDHVCNKEFKAVDSPLVTEDVDVPDGYMALDIGPKTIHMYEEVIGRCKSAIWNGPMGVFEMPCISKGTFAVAKAMGTGTQKDGLLSIIGGGDTASAAELSARAKNMSHVSTGGGASLELLEGKTLPGVAILTDKQ</sequence>
<feature type="chain" id="PRO_0000145855" description="Phosphoglycerate kinase, cytosolic">
    <location>
        <begin position="1"/>
        <end position="417"/>
    </location>
</feature>
<feature type="binding site" evidence="2">
    <location>
        <position position="23"/>
    </location>
    <ligand>
        <name>(2R)-3-phosphoglycerate</name>
        <dbReference type="ChEBI" id="CHEBI:58272"/>
    </ligand>
</feature>
<feature type="binding site" evidence="4">
    <location>
        <position position="24"/>
    </location>
    <ligand>
        <name>(2R)-3-phosphoglycerate</name>
        <dbReference type="ChEBI" id="CHEBI:58272"/>
    </ligand>
</feature>
<feature type="binding site" evidence="2">
    <location>
        <position position="25"/>
    </location>
    <ligand>
        <name>(2R)-3-phosphoglycerate</name>
        <dbReference type="ChEBI" id="CHEBI:58272"/>
    </ligand>
</feature>
<feature type="binding site" evidence="4">
    <location>
        <position position="26"/>
    </location>
    <ligand>
        <name>(2R)-3-phosphoglycerate</name>
        <dbReference type="ChEBI" id="CHEBI:58272"/>
    </ligand>
</feature>
<feature type="binding site" evidence="4">
    <location>
        <position position="39"/>
    </location>
    <ligand>
        <name>(2R)-3-phosphoglycerate</name>
        <dbReference type="ChEBI" id="CHEBI:58272"/>
    </ligand>
</feature>
<feature type="binding site" evidence="2">
    <location>
        <position position="61"/>
    </location>
    <ligand>
        <name>(2R)-3-phosphoglycerate</name>
        <dbReference type="ChEBI" id="CHEBI:58272"/>
    </ligand>
</feature>
<feature type="binding site" evidence="4">
    <location>
        <position position="62"/>
    </location>
    <ligand>
        <name>(2R)-3-phosphoglycerate</name>
        <dbReference type="ChEBI" id="CHEBI:58272"/>
    </ligand>
</feature>
<feature type="binding site" evidence="2">
    <location>
        <position position="64"/>
    </location>
    <ligand>
        <name>(2R)-3-phosphoglycerate</name>
        <dbReference type="ChEBI" id="CHEBI:58272"/>
    </ligand>
</feature>
<feature type="binding site" evidence="4">
    <location>
        <position position="65"/>
    </location>
    <ligand>
        <name>(2R)-3-phosphoglycerate</name>
        <dbReference type="ChEBI" id="CHEBI:58272"/>
    </ligand>
</feature>
<feature type="binding site" evidence="4">
    <location>
        <position position="132"/>
    </location>
    <ligand>
        <name>(2R)-3-phosphoglycerate</name>
        <dbReference type="ChEBI" id="CHEBI:58272"/>
    </ligand>
</feature>
<feature type="binding site" evidence="2">
    <location>
        <position position="168"/>
    </location>
    <ligand>
        <name>(2R)-3-phosphoglycerate</name>
        <dbReference type="ChEBI" id="CHEBI:58272"/>
    </ligand>
</feature>
<feature type="binding site" evidence="4">
    <location>
        <position position="169"/>
    </location>
    <ligand>
        <name>(2R)-3-phosphoglycerate</name>
        <dbReference type="ChEBI" id="CHEBI:58272"/>
    </ligand>
</feature>
<feature type="binding site" evidence="2">
    <location>
        <position position="214"/>
    </location>
    <ligand>
        <name>ADP</name>
        <dbReference type="ChEBI" id="CHEBI:456216"/>
    </ligand>
</feature>
<feature type="binding site" evidence="2">
    <location>
        <position position="214"/>
    </location>
    <ligand>
        <name>CDP</name>
        <dbReference type="ChEBI" id="CHEBI:58069"/>
    </ligand>
</feature>
<feature type="binding site" evidence="3">
    <location>
        <position position="215"/>
    </location>
    <ligand>
        <name>ADP</name>
        <dbReference type="ChEBI" id="CHEBI:456216"/>
    </ligand>
</feature>
<feature type="binding site" evidence="4">
    <location>
        <position position="215"/>
    </location>
    <ligand>
        <name>AMP</name>
        <dbReference type="ChEBI" id="CHEBI:456215"/>
    </ligand>
</feature>
<feature type="binding site" evidence="4">
    <location>
        <position position="215"/>
    </location>
    <ligand>
        <name>ATP</name>
        <dbReference type="ChEBI" id="CHEBI:30616"/>
    </ligand>
</feature>
<feature type="binding site" evidence="2">
    <location>
        <position position="215"/>
    </location>
    <ligand>
        <name>Mg(2+)</name>
        <dbReference type="ChEBI" id="CHEBI:18420"/>
    </ligand>
</feature>
<feature type="binding site" evidence="3">
    <location>
        <position position="216"/>
    </location>
    <ligand>
        <name>(2R)-3-phosphoglycerate</name>
        <dbReference type="ChEBI" id="CHEBI:58272"/>
    </ligand>
</feature>
<feature type="binding site" evidence="4">
    <location>
        <position position="216"/>
    </location>
    <ligand>
        <name>AMP</name>
        <dbReference type="ChEBI" id="CHEBI:456215"/>
    </ligand>
</feature>
<feature type="binding site" evidence="2">
    <location>
        <position position="219"/>
    </location>
    <ligand>
        <name>CDP</name>
        <dbReference type="ChEBI" id="CHEBI:58069"/>
    </ligand>
</feature>
<feature type="binding site" evidence="2">
    <location>
        <position position="219"/>
    </location>
    <ligand>
        <name>Mg(2+)</name>
        <dbReference type="ChEBI" id="CHEBI:18420"/>
    </ligand>
</feature>
<feature type="binding site" evidence="3">
    <location>
        <position position="220"/>
    </location>
    <ligand>
        <name>ADP</name>
        <dbReference type="ChEBI" id="CHEBI:456216"/>
    </ligand>
</feature>
<feature type="binding site" evidence="4">
    <location>
        <position position="220"/>
    </location>
    <ligand>
        <name>AMP</name>
        <dbReference type="ChEBI" id="CHEBI:456215"/>
    </ligand>
</feature>
<feature type="binding site" evidence="4">
    <location>
        <position position="220"/>
    </location>
    <ligand>
        <name>ATP</name>
        <dbReference type="ChEBI" id="CHEBI:30616"/>
    </ligand>
</feature>
<feature type="binding site" evidence="2">
    <location>
        <position position="238"/>
    </location>
    <ligand>
        <name>ADP</name>
        <dbReference type="ChEBI" id="CHEBI:456216"/>
    </ligand>
</feature>
<feature type="binding site" evidence="2">
    <location>
        <position position="238"/>
    </location>
    <ligand>
        <name>CDP</name>
        <dbReference type="ChEBI" id="CHEBI:58069"/>
    </ligand>
</feature>
<feature type="binding site" evidence="4">
    <location>
        <position position="239"/>
    </location>
    <ligand>
        <name>AMP</name>
        <dbReference type="ChEBI" id="CHEBI:456215"/>
    </ligand>
</feature>
<feature type="binding site" evidence="4">
    <location>
        <position position="239"/>
    </location>
    <ligand>
        <name>ATP</name>
        <dbReference type="ChEBI" id="CHEBI:30616"/>
    </ligand>
</feature>
<feature type="binding site" evidence="3">
    <location>
        <position position="311"/>
    </location>
    <ligand>
        <name>ADP</name>
        <dbReference type="ChEBI" id="CHEBI:456216"/>
    </ligand>
</feature>
<feature type="binding site" evidence="4">
    <location>
        <position position="311"/>
    </location>
    <ligand>
        <name>AMP</name>
        <dbReference type="ChEBI" id="CHEBI:456215"/>
    </ligand>
</feature>
<feature type="binding site" evidence="4">
    <location>
        <position position="311"/>
    </location>
    <ligand>
        <name>ATP</name>
        <dbReference type="ChEBI" id="CHEBI:30616"/>
    </ligand>
</feature>
<feature type="binding site" evidence="3">
    <location>
        <position position="335"/>
    </location>
    <ligand>
        <name>ADP</name>
        <dbReference type="ChEBI" id="CHEBI:456216"/>
    </ligand>
</feature>
<feature type="binding site" evidence="2">
    <location>
        <position position="336"/>
    </location>
    <ligand>
        <name>CDP</name>
        <dbReference type="ChEBI" id="CHEBI:58069"/>
    </ligand>
</feature>
<feature type="binding site" evidence="2">
    <location>
        <position position="341"/>
    </location>
    <ligand>
        <name>ADP</name>
        <dbReference type="ChEBI" id="CHEBI:456216"/>
    </ligand>
</feature>
<feature type="binding site" evidence="2">
    <location>
        <position position="341"/>
    </location>
    <ligand>
        <name>CDP</name>
        <dbReference type="ChEBI" id="CHEBI:58069"/>
    </ligand>
</feature>
<feature type="binding site" evidence="3">
    <location>
        <position position="342"/>
    </location>
    <ligand>
        <name>ADP</name>
        <dbReference type="ChEBI" id="CHEBI:456216"/>
    </ligand>
</feature>
<feature type="binding site" evidence="4">
    <location>
        <position position="342"/>
    </location>
    <ligand>
        <name>AMP</name>
        <dbReference type="ChEBI" id="CHEBI:456215"/>
    </ligand>
</feature>
<feature type="binding site" evidence="4">
    <location>
        <position position="342"/>
    </location>
    <ligand>
        <name>ATP</name>
        <dbReference type="ChEBI" id="CHEBI:30616"/>
    </ligand>
</feature>
<feature type="binding site" evidence="3">
    <location>
        <position position="374"/>
    </location>
    <ligand>
        <name>ADP</name>
        <dbReference type="ChEBI" id="CHEBI:456216"/>
    </ligand>
</feature>
<feature type="binding site" evidence="4">
    <location>
        <position position="374"/>
    </location>
    <ligand>
        <name>ATP</name>
        <dbReference type="ChEBI" id="CHEBI:30616"/>
    </ligand>
</feature>
<feature type="binding site" evidence="4">
    <location>
        <position position="374"/>
    </location>
    <ligand>
        <name>Mg(2+)</name>
        <dbReference type="ChEBI" id="CHEBI:18420"/>
    </ligand>
</feature>
<feature type="binding site" evidence="3">
    <location>
        <position position="375"/>
    </location>
    <ligand>
        <name>ADP</name>
        <dbReference type="ChEBI" id="CHEBI:456216"/>
    </ligand>
</feature>
<feature type="binding site" evidence="4">
    <location>
        <position position="375"/>
    </location>
    <ligand>
        <name>ATP</name>
        <dbReference type="ChEBI" id="CHEBI:30616"/>
    </ligand>
</feature>
<evidence type="ECO:0000250" key="1"/>
<evidence type="ECO:0000250" key="2">
    <source>
        <dbReference type="UniProtKB" id="P00558"/>
    </source>
</evidence>
<evidence type="ECO:0000250" key="3">
    <source>
        <dbReference type="UniProtKB" id="P07378"/>
    </source>
</evidence>
<evidence type="ECO:0000250" key="4">
    <source>
        <dbReference type="UniProtKB" id="Q7SIB7"/>
    </source>
</evidence>
<evidence type="ECO:0000305" key="5"/>
<gene>
    <name type="primary">PGKB</name>
</gene>
<accession>Q27684</accession>
<protein>
    <recommendedName>
        <fullName>Phosphoglycerate kinase, cytosolic</fullName>
        <ecNumber evidence="2">2.7.2.3</ecNumber>
    </recommendedName>
    <alternativeName>
        <fullName>Phosphoglycerate kinase B</fullName>
    </alternativeName>
</protein>
<proteinExistence type="inferred from homology"/>